<dbReference type="EC" id="7.3.2.5" evidence="1"/>
<dbReference type="EMBL" id="CP000301">
    <property type="protein sequence ID" value="ABD86280.1"/>
    <property type="molecule type" value="Genomic_DNA"/>
</dbReference>
<dbReference type="SMR" id="Q21BF6"/>
<dbReference type="STRING" id="316056.RPC_0708"/>
<dbReference type="KEGG" id="rpc:RPC_0708"/>
<dbReference type="eggNOG" id="COG4148">
    <property type="taxonomic scope" value="Bacteria"/>
</dbReference>
<dbReference type="HOGENOM" id="CLU_000604_1_1_5"/>
<dbReference type="OrthoDB" id="8134152at2"/>
<dbReference type="GO" id="GO:0005886">
    <property type="term" value="C:plasma membrane"/>
    <property type="evidence" value="ECO:0007669"/>
    <property type="project" value="UniProtKB-SubCell"/>
</dbReference>
<dbReference type="GO" id="GO:0015412">
    <property type="term" value="F:ABC-type molybdate transporter activity"/>
    <property type="evidence" value="ECO:0007669"/>
    <property type="project" value="UniProtKB-EC"/>
</dbReference>
<dbReference type="GO" id="GO:0005524">
    <property type="term" value="F:ATP binding"/>
    <property type="evidence" value="ECO:0007669"/>
    <property type="project" value="UniProtKB-KW"/>
</dbReference>
<dbReference type="GO" id="GO:0016887">
    <property type="term" value="F:ATP hydrolysis activity"/>
    <property type="evidence" value="ECO:0007669"/>
    <property type="project" value="InterPro"/>
</dbReference>
<dbReference type="Gene3D" id="2.40.50.100">
    <property type="match status" value="1"/>
</dbReference>
<dbReference type="Gene3D" id="3.40.50.300">
    <property type="entry name" value="P-loop containing nucleotide triphosphate hydrolases"/>
    <property type="match status" value="1"/>
</dbReference>
<dbReference type="InterPro" id="IPR003593">
    <property type="entry name" value="AAA+_ATPase"/>
</dbReference>
<dbReference type="InterPro" id="IPR003439">
    <property type="entry name" value="ABC_transporter-like_ATP-bd"/>
</dbReference>
<dbReference type="InterPro" id="IPR017871">
    <property type="entry name" value="ABC_transporter-like_CS"/>
</dbReference>
<dbReference type="InterPro" id="IPR008995">
    <property type="entry name" value="Mo/tungstate-bd_C_term_dom"/>
</dbReference>
<dbReference type="InterPro" id="IPR011868">
    <property type="entry name" value="ModC_ABC_ATP-bd"/>
</dbReference>
<dbReference type="InterPro" id="IPR050334">
    <property type="entry name" value="Molybdenum_import_ModC"/>
</dbReference>
<dbReference type="InterPro" id="IPR004606">
    <property type="entry name" value="Mop_domain"/>
</dbReference>
<dbReference type="InterPro" id="IPR027417">
    <property type="entry name" value="P-loop_NTPase"/>
</dbReference>
<dbReference type="InterPro" id="IPR005116">
    <property type="entry name" value="Transp-assoc_OB_typ1"/>
</dbReference>
<dbReference type="NCBIfam" id="TIGR02142">
    <property type="entry name" value="modC_ABC"/>
    <property type="match status" value="1"/>
</dbReference>
<dbReference type="PANTHER" id="PTHR43514">
    <property type="entry name" value="ABC TRANSPORTER I FAMILY MEMBER 10"/>
    <property type="match status" value="1"/>
</dbReference>
<dbReference type="PANTHER" id="PTHR43514:SF10">
    <property type="entry name" value="MOLYBDENUM IMPORT ATP-BINDING PROTEIN MODC 2"/>
    <property type="match status" value="1"/>
</dbReference>
<dbReference type="Pfam" id="PF00005">
    <property type="entry name" value="ABC_tran"/>
    <property type="match status" value="1"/>
</dbReference>
<dbReference type="Pfam" id="PF03459">
    <property type="entry name" value="TOBE"/>
    <property type="match status" value="1"/>
</dbReference>
<dbReference type="SMART" id="SM00382">
    <property type="entry name" value="AAA"/>
    <property type="match status" value="1"/>
</dbReference>
<dbReference type="SUPFAM" id="SSF50331">
    <property type="entry name" value="MOP-like"/>
    <property type="match status" value="1"/>
</dbReference>
<dbReference type="SUPFAM" id="SSF52540">
    <property type="entry name" value="P-loop containing nucleoside triphosphate hydrolases"/>
    <property type="match status" value="1"/>
</dbReference>
<dbReference type="PROSITE" id="PS00211">
    <property type="entry name" value="ABC_TRANSPORTER_1"/>
    <property type="match status" value="1"/>
</dbReference>
<dbReference type="PROSITE" id="PS50893">
    <property type="entry name" value="ABC_TRANSPORTER_2"/>
    <property type="match status" value="1"/>
</dbReference>
<dbReference type="PROSITE" id="PS51241">
    <property type="entry name" value="MODC"/>
    <property type="match status" value="1"/>
</dbReference>
<dbReference type="PROSITE" id="PS51866">
    <property type="entry name" value="MOP"/>
    <property type="match status" value="1"/>
</dbReference>
<keyword id="KW-0067">ATP-binding</keyword>
<keyword id="KW-0997">Cell inner membrane</keyword>
<keyword id="KW-1003">Cell membrane</keyword>
<keyword id="KW-0472">Membrane</keyword>
<keyword id="KW-0500">Molybdenum</keyword>
<keyword id="KW-0547">Nucleotide-binding</keyword>
<keyword id="KW-1278">Translocase</keyword>
<keyword id="KW-0813">Transport</keyword>
<organism>
    <name type="scientific">Rhodopseudomonas palustris (strain BisB18)</name>
    <dbReference type="NCBI Taxonomy" id="316056"/>
    <lineage>
        <taxon>Bacteria</taxon>
        <taxon>Pseudomonadati</taxon>
        <taxon>Pseudomonadota</taxon>
        <taxon>Alphaproteobacteria</taxon>
        <taxon>Hyphomicrobiales</taxon>
        <taxon>Nitrobacteraceae</taxon>
        <taxon>Rhodopseudomonas</taxon>
    </lineage>
</organism>
<protein>
    <recommendedName>
        <fullName evidence="1">Molybdenum import ATP-binding protein ModC</fullName>
        <ecNumber evidence="1">7.3.2.5</ecNumber>
    </recommendedName>
</protein>
<accession>Q21BF6</accession>
<gene>
    <name evidence="1" type="primary">modC</name>
    <name type="ordered locus">RPC_0708</name>
</gene>
<reference key="1">
    <citation type="submission" date="2006-03" db="EMBL/GenBank/DDBJ databases">
        <title>Complete sequence of Rhodopseudomonas palustris BisB18.</title>
        <authorList>
            <consortium name="US DOE Joint Genome Institute"/>
            <person name="Copeland A."/>
            <person name="Lucas S."/>
            <person name="Lapidus A."/>
            <person name="Barry K."/>
            <person name="Detter J.C."/>
            <person name="Glavina del Rio T."/>
            <person name="Hammon N."/>
            <person name="Israni S."/>
            <person name="Dalin E."/>
            <person name="Tice H."/>
            <person name="Pitluck S."/>
            <person name="Chain P."/>
            <person name="Malfatti S."/>
            <person name="Shin M."/>
            <person name="Vergez L."/>
            <person name="Schmutz J."/>
            <person name="Larimer F."/>
            <person name="Land M."/>
            <person name="Hauser L."/>
            <person name="Pelletier D.A."/>
            <person name="Kyrpides N."/>
            <person name="Anderson I."/>
            <person name="Oda Y."/>
            <person name="Harwood C.S."/>
            <person name="Richardson P."/>
        </authorList>
    </citation>
    <scope>NUCLEOTIDE SEQUENCE [LARGE SCALE GENOMIC DNA]</scope>
    <source>
        <strain>BisB18</strain>
    </source>
</reference>
<evidence type="ECO:0000255" key="1">
    <source>
        <dbReference type="HAMAP-Rule" id="MF_01705"/>
    </source>
</evidence>
<evidence type="ECO:0000255" key="2">
    <source>
        <dbReference type="PROSITE-ProRule" id="PRU01213"/>
    </source>
</evidence>
<feature type="chain" id="PRO_0000271684" description="Molybdenum import ATP-binding protein ModC">
    <location>
        <begin position="1"/>
        <end position="381"/>
    </location>
</feature>
<feature type="domain" description="ABC transporter" evidence="1">
    <location>
        <begin position="5"/>
        <end position="238"/>
    </location>
</feature>
<feature type="domain" description="Mop" evidence="2">
    <location>
        <begin position="297"/>
        <end position="367"/>
    </location>
</feature>
<feature type="binding site" evidence="1">
    <location>
        <begin position="37"/>
        <end position="44"/>
    </location>
    <ligand>
        <name>ATP</name>
        <dbReference type="ChEBI" id="CHEBI:30616"/>
    </ligand>
</feature>
<sequence length="381" mass="40798">MRDVSRSIQAQFRGALGRFALDAAFTVPATGITGLFGPSGCGKSTVLRCIAGLQQLPGSTFAIDGDVWQDASQFRQPHQRPIGYVFQEASLFAHLSVKANLLYGAPRDAAHARDSITFDEVIELLGLAALLERSPRHLSGGERQRVAIGRALLSQPKLLLMDEPLSALDRLTKDEILPFLERLHERLALPVIYVSHDMAEIERLADHLVLMRKGQVLAAGPLAALQSDPALPLAASRDAAVNFEATVEDYDPGYGLLTVAVDGGRLLVPAPPAQRGEHRRLRIAAGDVSLARELPHNTSILNVLPARIVSHNPLGDSEILVVLALGGNGEGARLLARVTRRSWDHLELADGIGLIAQVKGVALAPGRNTGTHASSPGLRGR</sequence>
<proteinExistence type="inferred from homology"/>
<comment type="function">
    <text evidence="1">Part of the ABC transporter complex ModABC involved in molybdenum import. Responsible for energy coupling to the transport system.</text>
</comment>
<comment type="catalytic activity">
    <reaction evidence="1">
        <text>molybdate(out) + ATP + H2O = molybdate(in) + ADP + phosphate + H(+)</text>
        <dbReference type="Rhea" id="RHEA:22020"/>
        <dbReference type="ChEBI" id="CHEBI:15377"/>
        <dbReference type="ChEBI" id="CHEBI:15378"/>
        <dbReference type="ChEBI" id="CHEBI:30616"/>
        <dbReference type="ChEBI" id="CHEBI:36264"/>
        <dbReference type="ChEBI" id="CHEBI:43474"/>
        <dbReference type="ChEBI" id="CHEBI:456216"/>
        <dbReference type="EC" id="7.3.2.5"/>
    </reaction>
</comment>
<comment type="subunit">
    <text evidence="1">The complex is composed of two ATP-binding proteins (ModC), two transmembrane proteins (ModB) and a solute-binding protein (ModA).</text>
</comment>
<comment type="subcellular location">
    <subcellularLocation>
        <location evidence="1">Cell inner membrane</location>
        <topology evidence="1">Peripheral membrane protein</topology>
    </subcellularLocation>
</comment>
<comment type="similarity">
    <text evidence="1">Belongs to the ABC transporter superfamily. Molybdate importer (TC 3.A.1.8) family.</text>
</comment>
<name>MODC_RHOPB</name>